<feature type="chain" id="PRO_0000053549" description="Nuclear receptor subfamily 1 group I member 2">
    <location>
        <begin position="1"/>
        <end position="431"/>
    </location>
</feature>
<feature type="domain" description="NR LBD" evidence="4">
    <location>
        <begin position="143"/>
        <end position="430"/>
    </location>
</feature>
<feature type="DNA-binding region" description="Nuclear receptor" evidence="3">
    <location>
        <begin position="35"/>
        <end position="104"/>
    </location>
</feature>
<feature type="zinc finger region" description="NR C4-type" evidence="3">
    <location>
        <begin position="38"/>
        <end position="58"/>
    </location>
</feature>
<feature type="zinc finger region" description="NR C4-type" evidence="3">
    <location>
        <begin position="74"/>
        <end position="99"/>
    </location>
</feature>
<feature type="region of interest" description="Hinge">
    <location>
        <begin position="105"/>
        <end position="142"/>
    </location>
</feature>
<feature type="short sequence motif" description="Bipartite nuclear localization signal" evidence="1">
    <location>
        <begin position="63"/>
        <end position="89"/>
    </location>
</feature>
<feature type="binding site" evidence="2">
    <location>
        <position position="244"/>
    </location>
    <ligand>
        <name>hyperforin</name>
        <dbReference type="ChEBI" id="CHEBI:5834"/>
        <note>agonist</note>
    </ligand>
</feature>
<feature type="binding site" evidence="2">
    <location>
        <begin position="282"/>
        <end position="285"/>
    </location>
    <ligand>
        <name>hyperforin</name>
        <dbReference type="ChEBI" id="CHEBI:5834"/>
        <note>agonist</note>
    </ligand>
</feature>
<feature type="splice variant" id="VSP_003670" description="In isoform 2." evidence="8">
    <location>
        <begin position="171"/>
        <end position="211"/>
    </location>
</feature>
<keyword id="KW-0010">Activator</keyword>
<keyword id="KW-0025">Alternative splicing</keyword>
<keyword id="KW-0238">DNA-binding</keyword>
<keyword id="KW-0479">Metal-binding</keyword>
<keyword id="KW-0539">Nucleus</keyword>
<keyword id="KW-0675">Receptor</keyword>
<keyword id="KW-1185">Reference proteome</keyword>
<keyword id="KW-0804">Transcription</keyword>
<keyword id="KW-0805">Transcription regulation</keyword>
<keyword id="KW-0862">Zinc</keyword>
<keyword id="KW-0863">Zinc-finger</keyword>
<evidence type="ECO:0000250" key="1"/>
<evidence type="ECO:0000250" key="2">
    <source>
        <dbReference type="UniProtKB" id="O75469"/>
    </source>
</evidence>
<evidence type="ECO:0000255" key="3">
    <source>
        <dbReference type="PROSITE-ProRule" id="PRU00407"/>
    </source>
</evidence>
<evidence type="ECO:0000255" key="4">
    <source>
        <dbReference type="PROSITE-ProRule" id="PRU01189"/>
    </source>
</evidence>
<evidence type="ECO:0000269" key="5">
    <source>
    </source>
</evidence>
<evidence type="ECO:0000269" key="6">
    <source>
    </source>
</evidence>
<evidence type="ECO:0000269" key="7">
    <source>
    </source>
</evidence>
<evidence type="ECO:0000305" key="8"/>
<organism>
    <name type="scientific">Mus musculus</name>
    <name type="common">Mouse</name>
    <dbReference type="NCBI Taxonomy" id="10090"/>
    <lineage>
        <taxon>Eukaryota</taxon>
        <taxon>Metazoa</taxon>
        <taxon>Chordata</taxon>
        <taxon>Craniata</taxon>
        <taxon>Vertebrata</taxon>
        <taxon>Euteleostomi</taxon>
        <taxon>Mammalia</taxon>
        <taxon>Eutheria</taxon>
        <taxon>Euarchontoglires</taxon>
        <taxon>Glires</taxon>
        <taxon>Rodentia</taxon>
        <taxon>Myomorpha</taxon>
        <taxon>Muroidea</taxon>
        <taxon>Muridae</taxon>
        <taxon>Murinae</taxon>
        <taxon>Mus</taxon>
        <taxon>Mus</taxon>
    </lineage>
</organism>
<sequence>MRPEESWSRVGLVQCEEADSALEEPINVEEEDGGLQICRVCGDKANGYHFNVMTCEGCKGFFRRAMKRNVRLRCPFRKGTCEITRKTRRQCQACRLRKCLESGMKKEMIMSDAAVEQRRALIKRKKREKIEAPPPGGQGLTEEQQALIQELMDAQMQTFDTTFSHFKDFRLPAVFHSGCELPEFLQASLLEDPATWSQIMKDRVPMKISLQLRGEDGSIWNYQPPSKSDGKEIIPLLPHLADVSTYMFKGVINFAKVISYFRDLPIEDQISLLKGATFEMCILRFNTMFDTETGTWECGRLAYCFEDPNGGFQKLLLDPLMKFHCMLKKLQLHKEEYVLMQAISLFSPDRPGVVQRSVVDQLQERFALTLKAYIECSRPYPAHRFLFLKIMAVLTELRSINAQQTQQLLRIQDSHPFATPLMQELFSSTDG</sequence>
<comment type="function">
    <text evidence="1 5 6">Nuclear receptor that binds and is activated by a variety of endogenous and xenobiotic compounds. Transcription factor that activates the transcription of multiple genes involved in the metabolism and secretion of potentially harmful xenobiotics, endogenous compounds and drugs. Response to specific ligands is species-specific, due to differences in the ligand-binding domain. Binds to a response element in the promoters of the CYP3A4 and ABCB1/MDR1 genes (By similarity). Activated by naturally occurring steroids such as pregnenolone and progesterone, the cholesterol metabolite 5-beta-cholestane-3-alpha,7-alpha,12-alpha-triol, synthetic glucocorticoids and antiglucocorticoids and 16-alpha-carbonitrile (PCN).</text>
</comment>
<comment type="subunit">
    <text evidence="2 7">Heterodimer with RXRA (By similarity). Interacts with NCOA1 (By similarity). Interacts (via domain NR LBD) with CRY1 and CRY2 in a ligand-dependent manner (PubMed:28751364).</text>
</comment>
<comment type="subcellular location">
    <subcellularLocation>
        <location evidence="3">Nucleus</location>
    </subcellularLocation>
</comment>
<comment type="alternative products">
    <event type="alternative splicing"/>
    <isoform>
        <id>O54915-1</id>
        <name>1</name>
        <name>PXR.1</name>
        <sequence type="displayed"/>
    </isoform>
    <isoform>
        <id>O54915-2</id>
        <name>2</name>
        <name>PXR.2</name>
        <sequence type="described" ref="VSP_003670"/>
    </isoform>
</comment>
<comment type="similarity">
    <text evidence="8">Belongs to the nuclear hormone receptor family. NR1 subfamily.</text>
</comment>
<proteinExistence type="evidence at protein level"/>
<reference key="1">
    <citation type="journal article" date="1998" name="Cell">
        <title>An orphan nuclear receptor activated by pregnanes defines a novel steroid signaling pathway.</title>
        <authorList>
            <person name="Kliewer S.A."/>
            <person name="Moore J.T."/>
            <person name="Wade L."/>
            <person name="Staudinger J.L."/>
            <person name="Watson M.A."/>
            <person name="Jones S.A."/>
            <person name="McKee D.D."/>
            <person name="Oliver B.B."/>
            <person name="Willson T.M."/>
            <person name="Zetterstrom R.H."/>
            <person name="Perlmann T."/>
            <person name="Lehmann J.M."/>
        </authorList>
    </citation>
    <scope>NUCLEOTIDE SEQUENCE [MRNA]</scope>
    <scope>ALTERNATIVE SPLICING</scope>
    <source>
        <tissue>Liver</tissue>
    </source>
</reference>
<reference key="2">
    <citation type="journal article" date="2005" name="Science">
        <title>The transcriptional landscape of the mammalian genome.</title>
        <authorList>
            <person name="Carninci P."/>
            <person name="Kasukawa T."/>
            <person name="Katayama S."/>
            <person name="Gough J."/>
            <person name="Frith M.C."/>
            <person name="Maeda N."/>
            <person name="Oyama R."/>
            <person name="Ravasi T."/>
            <person name="Lenhard B."/>
            <person name="Wells C."/>
            <person name="Kodzius R."/>
            <person name="Shimokawa K."/>
            <person name="Bajic V.B."/>
            <person name="Brenner S.E."/>
            <person name="Batalov S."/>
            <person name="Forrest A.R."/>
            <person name="Zavolan M."/>
            <person name="Davis M.J."/>
            <person name="Wilming L.G."/>
            <person name="Aidinis V."/>
            <person name="Allen J.E."/>
            <person name="Ambesi-Impiombato A."/>
            <person name="Apweiler R."/>
            <person name="Aturaliya R.N."/>
            <person name="Bailey T.L."/>
            <person name="Bansal M."/>
            <person name="Baxter L."/>
            <person name="Beisel K.W."/>
            <person name="Bersano T."/>
            <person name="Bono H."/>
            <person name="Chalk A.M."/>
            <person name="Chiu K.P."/>
            <person name="Choudhary V."/>
            <person name="Christoffels A."/>
            <person name="Clutterbuck D.R."/>
            <person name="Crowe M.L."/>
            <person name="Dalla E."/>
            <person name="Dalrymple B.P."/>
            <person name="de Bono B."/>
            <person name="Della Gatta G."/>
            <person name="di Bernardo D."/>
            <person name="Down T."/>
            <person name="Engstrom P."/>
            <person name="Fagiolini M."/>
            <person name="Faulkner G."/>
            <person name="Fletcher C.F."/>
            <person name="Fukushima T."/>
            <person name="Furuno M."/>
            <person name="Futaki S."/>
            <person name="Gariboldi M."/>
            <person name="Georgii-Hemming P."/>
            <person name="Gingeras T.R."/>
            <person name="Gojobori T."/>
            <person name="Green R.E."/>
            <person name="Gustincich S."/>
            <person name="Harbers M."/>
            <person name="Hayashi Y."/>
            <person name="Hensch T.K."/>
            <person name="Hirokawa N."/>
            <person name="Hill D."/>
            <person name="Huminiecki L."/>
            <person name="Iacono M."/>
            <person name="Ikeo K."/>
            <person name="Iwama A."/>
            <person name="Ishikawa T."/>
            <person name="Jakt M."/>
            <person name="Kanapin A."/>
            <person name="Katoh M."/>
            <person name="Kawasawa Y."/>
            <person name="Kelso J."/>
            <person name="Kitamura H."/>
            <person name="Kitano H."/>
            <person name="Kollias G."/>
            <person name="Krishnan S.P."/>
            <person name="Kruger A."/>
            <person name="Kummerfeld S.K."/>
            <person name="Kurochkin I.V."/>
            <person name="Lareau L.F."/>
            <person name="Lazarevic D."/>
            <person name="Lipovich L."/>
            <person name="Liu J."/>
            <person name="Liuni S."/>
            <person name="McWilliam S."/>
            <person name="Madan Babu M."/>
            <person name="Madera M."/>
            <person name="Marchionni L."/>
            <person name="Matsuda H."/>
            <person name="Matsuzawa S."/>
            <person name="Miki H."/>
            <person name="Mignone F."/>
            <person name="Miyake S."/>
            <person name="Morris K."/>
            <person name="Mottagui-Tabar S."/>
            <person name="Mulder N."/>
            <person name="Nakano N."/>
            <person name="Nakauchi H."/>
            <person name="Ng P."/>
            <person name="Nilsson R."/>
            <person name="Nishiguchi S."/>
            <person name="Nishikawa S."/>
            <person name="Nori F."/>
            <person name="Ohara O."/>
            <person name="Okazaki Y."/>
            <person name="Orlando V."/>
            <person name="Pang K.C."/>
            <person name="Pavan W.J."/>
            <person name="Pavesi G."/>
            <person name="Pesole G."/>
            <person name="Petrovsky N."/>
            <person name="Piazza S."/>
            <person name="Reed J."/>
            <person name="Reid J.F."/>
            <person name="Ring B.Z."/>
            <person name="Ringwald M."/>
            <person name="Rost B."/>
            <person name="Ruan Y."/>
            <person name="Salzberg S.L."/>
            <person name="Sandelin A."/>
            <person name="Schneider C."/>
            <person name="Schoenbach C."/>
            <person name="Sekiguchi K."/>
            <person name="Semple C.A."/>
            <person name="Seno S."/>
            <person name="Sessa L."/>
            <person name="Sheng Y."/>
            <person name="Shibata Y."/>
            <person name="Shimada H."/>
            <person name="Shimada K."/>
            <person name="Silva D."/>
            <person name="Sinclair B."/>
            <person name="Sperling S."/>
            <person name="Stupka E."/>
            <person name="Sugiura K."/>
            <person name="Sultana R."/>
            <person name="Takenaka Y."/>
            <person name="Taki K."/>
            <person name="Tammoja K."/>
            <person name="Tan S.L."/>
            <person name="Tang S."/>
            <person name="Taylor M.S."/>
            <person name="Tegner J."/>
            <person name="Teichmann S.A."/>
            <person name="Ueda H.R."/>
            <person name="van Nimwegen E."/>
            <person name="Verardo R."/>
            <person name="Wei C.L."/>
            <person name="Yagi K."/>
            <person name="Yamanishi H."/>
            <person name="Zabarovsky E."/>
            <person name="Zhu S."/>
            <person name="Zimmer A."/>
            <person name="Hide W."/>
            <person name="Bult C."/>
            <person name="Grimmond S.M."/>
            <person name="Teasdale R.D."/>
            <person name="Liu E.T."/>
            <person name="Brusic V."/>
            <person name="Quackenbush J."/>
            <person name="Wahlestedt C."/>
            <person name="Mattick J.S."/>
            <person name="Hume D.A."/>
            <person name="Kai C."/>
            <person name="Sasaki D."/>
            <person name="Tomaru Y."/>
            <person name="Fukuda S."/>
            <person name="Kanamori-Katayama M."/>
            <person name="Suzuki M."/>
            <person name="Aoki J."/>
            <person name="Arakawa T."/>
            <person name="Iida J."/>
            <person name="Imamura K."/>
            <person name="Itoh M."/>
            <person name="Kato T."/>
            <person name="Kawaji H."/>
            <person name="Kawagashira N."/>
            <person name="Kawashima T."/>
            <person name="Kojima M."/>
            <person name="Kondo S."/>
            <person name="Konno H."/>
            <person name="Nakano K."/>
            <person name="Ninomiya N."/>
            <person name="Nishio T."/>
            <person name="Okada M."/>
            <person name="Plessy C."/>
            <person name="Shibata K."/>
            <person name="Shiraki T."/>
            <person name="Suzuki S."/>
            <person name="Tagami M."/>
            <person name="Waki K."/>
            <person name="Watahiki A."/>
            <person name="Okamura-Oho Y."/>
            <person name="Suzuki H."/>
            <person name="Kawai J."/>
            <person name="Hayashizaki Y."/>
        </authorList>
    </citation>
    <scope>NUCLEOTIDE SEQUENCE [LARGE SCALE MRNA] (ISOFORM 1)</scope>
    <source>
        <strain>C57BL/6J</strain>
        <tissue>Cecum</tissue>
    </source>
</reference>
<reference key="3">
    <citation type="journal article" date="2003" name="Mol. Pharmacol.">
        <title>Molecular mechanism of nuclear translocation of an orphan nuclear receptor, SXR.</title>
        <authorList>
            <person name="Kawana K."/>
            <person name="Ikuta T."/>
            <person name="Kobayashi Y."/>
            <person name="Gotoh O."/>
            <person name="Takeda K."/>
            <person name="Kawajiri K."/>
        </authorList>
    </citation>
    <scope>SUBCELLULAR LOCATION</scope>
</reference>
<reference key="4">
    <citation type="journal article" date="2003" name="Proc. Natl. Acad. Sci. U.S.A.">
        <title>Identification of an endogenous ligand that activates pregnane X receptor-mediated sterol clearance.</title>
        <authorList>
            <person name="Dussault I."/>
            <person name="Yoo H.-D."/>
            <person name="Lin M."/>
            <person name="Wang E."/>
            <person name="Fan M."/>
            <person name="Batta A.K."/>
            <person name="Salen G."/>
            <person name="Erickson S.K."/>
            <person name="Forman B.M."/>
        </authorList>
    </citation>
    <scope>FUNCTION</scope>
</reference>
<reference key="5">
    <citation type="journal article" date="2009" name="J. Nutr.">
        <title>Human CYP3A4 and murine Cyp3A11 are regulated by equol and genistein via the pregnane X receptor in a species-specific manner.</title>
        <authorList>
            <person name="Li Y."/>
            <person name="Ross-Viola J.S."/>
            <person name="Shay N.F."/>
            <person name="Moore D.D."/>
            <person name="Ricketts M.L."/>
        </authorList>
    </citation>
    <scope>FUNCTION</scope>
</reference>
<reference key="6">
    <citation type="journal article" date="2017" name="Proc. Natl. Acad. Sci. U.S.A.">
        <title>Circadian repressors CRY1 and CRY2 broadly interact with nuclear receptors and modulate transcriptional activity.</title>
        <authorList>
            <person name="Kriebs A."/>
            <person name="Jordan S.D."/>
            <person name="Soto E."/>
            <person name="Henriksson E."/>
            <person name="Sandate C.R."/>
            <person name="Vaughan M.E."/>
            <person name="Chan A.B."/>
            <person name="Duglan D."/>
            <person name="Papp S.J."/>
            <person name="Huber A.L."/>
            <person name="Afetian M.E."/>
            <person name="Yu R.T."/>
            <person name="Zhao X."/>
            <person name="Downes M."/>
            <person name="Evans R.M."/>
            <person name="Lamia K.A."/>
        </authorList>
    </citation>
    <scope>INTERACTION WITH CRY1 AND CRY2</scope>
</reference>
<protein>
    <recommendedName>
        <fullName>Nuclear receptor subfamily 1 group I member 2</fullName>
    </recommendedName>
    <alternativeName>
        <fullName>Orphan nuclear receptor PXR</fullName>
    </alternativeName>
    <alternativeName>
        <fullName>Pregnane X receptor</fullName>
    </alternativeName>
</protein>
<accession>O54915</accession>
<gene>
    <name type="primary">Nr1i2</name>
    <name type="synonym">Pxr</name>
</gene>
<dbReference type="EMBL" id="AF031814">
    <property type="protein sequence ID" value="AAC39964.1"/>
    <property type="molecule type" value="mRNA"/>
</dbReference>
<dbReference type="EMBL" id="AK018630">
    <property type="protein sequence ID" value="BAB31316.1"/>
    <property type="molecule type" value="mRNA"/>
</dbReference>
<dbReference type="CCDS" id="CCDS28164.1">
    <molecule id="O54915-1"/>
</dbReference>
<dbReference type="RefSeq" id="NP_001091874.1">
    <molecule id="O54915-2"/>
    <property type="nucleotide sequence ID" value="NM_001098404.1"/>
</dbReference>
<dbReference type="RefSeq" id="NP_035066.1">
    <molecule id="O54915-1"/>
    <property type="nucleotide sequence ID" value="NM_010936.3"/>
</dbReference>
<dbReference type="RefSeq" id="XP_006521909.1">
    <molecule id="O54915-1"/>
    <property type="nucleotide sequence ID" value="XM_006521846.4"/>
</dbReference>
<dbReference type="RefSeq" id="XP_006521911.1">
    <molecule id="O54915-1"/>
    <property type="nucleotide sequence ID" value="XM_006521848.4"/>
</dbReference>
<dbReference type="SMR" id="O54915"/>
<dbReference type="BioGRID" id="201839">
    <property type="interactions" value="5"/>
</dbReference>
<dbReference type="ComplexPortal" id="CPX-505">
    <property type="entry name" value="RXRalpha-PXR nuclear receptor complex"/>
</dbReference>
<dbReference type="ComplexPortal" id="CPX-644">
    <property type="entry name" value="PXR-NCOA1 activated nuclear receptor complex"/>
</dbReference>
<dbReference type="FunCoup" id="O54915">
    <property type="interactions" value="524"/>
</dbReference>
<dbReference type="IntAct" id="O54915">
    <property type="interactions" value="2"/>
</dbReference>
<dbReference type="STRING" id="10090.ENSMUSP00000023504"/>
<dbReference type="ChEMBL" id="CHEMBL1743244"/>
<dbReference type="DrugCentral" id="O54915"/>
<dbReference type="GuidetoPHARMACOLOGY" id="606"/>
<dbReference type="iPTMnet" id="O54915"/>
<dbReference type="PhosphoSitePlus" id="O54915"/>
<dbReference type="PaxDb" id="10090-ENSMUSP00000023504"/>
<dbReference type="ProteomicsDB" id="293717">
    <molecule id="O54915-1"/>
</dbReference>
<dbReference type="ProteomicsDB" id="293718">
    <molecule id="O54915-2"/>
</dbReference>
<dbReference type="Antibodypedia" id="16619">
    <property type="antibodies" value="422 antibodies from 41 providers"/>
</dbReference>
<dbReference type="DNASU" id="18171"/>
<dbReference type="Ensembl" id="ENSMUST00000023504.5">
    <molecule id="O54915-1"/>
    <property type="protein sequence ID" value="ENSMUSP00000023504.5"/>
    <property type="gene ID" value="ENSMUSG00000022809.5"/>
</dbReference>
<dbReference type="GeneID" id="18171"/>
<dbReference type="KEGG" id="mmu:18171"/>
<dbReference type="UCSC" id="uc007zep.1">
    <molecule id="O54915-2"/>
    <property type="organism name" value="mouse"/>
</dbReference>
<dbReference type="UCSC" id="uc007zeq.1">
    <molecule id="O54915-1"/>
    <property type="organism name" value="mouse"/>
</dbReference>
<dbReference type="AGR" id="MGI:1337040"/>
<dbReference type="CTD" id="8856"/>
<dbReference type="MGI" id="MGI:1337040">
    <property type="gene designation" value="Nr1i2"/>
</dbReference>
<dbReference type="VEuPathDB" id="HostDB:ENSMUSG00000022809"/>
<dbReference type="eggNOG" id="KOG3575">
    <property type="taxonomic scope" value="Eukaryota"/>
</dbReference>
<dbReference type="GeneTree" id="ENSGT00940000161118"/>
<dbReference type="HOGENOM" id="CLU_007368_12_0_1"/>
<dbReference type="InParanoid" id="O54915"/>
<dbReference type="OMA" id="GTCEITQ"/>
<dbReference type="OrthoDB" id="6355676at2759"/>
<dbReference type="PhylomeDB" id="O54915"/>
<dbReference type="TreeFam" id="TF316304"/>
<dbReference type="Reactome" id="R-MMU-383280">
    <property type="pathway name" value="Nuclear Receptor transcription pathway"/>
</dbReference>
<dbReference type="Reactome" id="R-MMU-4090294">
    <property type="pathway name" value="SUMOylation of intracellular receptors"/>
</dbReference>
<dbReference type="BioGRID-ORCS" id="18171">
    <property type="hits" value="1 hit in 81 CRISPR screens"/>
</dbReference>
<dbReference type="ChiTaRS" id="Nr1i2">
    <property type="organism name" value="mouse"/>
</dbReference>
<dbReference type="PRO" id="PR:O54915"/>
<dbReference type="Proteomes" id="UP000000589">
    <property type="component" value="Chromosome 16"/>
</dbReference>
<dbReference type="RNAct" id="O54915">
    <property type="molecule type" value="protein"/>
</dbReference>
<dbReference type="Bgee" id="ENSMUSG00000022809">
    <property type="expression patterns" value="Expressed in duodenum and 53 other cell types or tissues"/>
</dbReference>
<dbReference type="ExpressionAtlas" id="O54915">
    <property type="expression patterns" value="baseline and differential"/>
</dbReference>
<dbReference type="GO" id="GO:0045111">
    <property type="term" value="C:intermediate filament cytoskeleton"/>
    <property type="evidence" value="ECO:0007669"/>
    <property type="project" value="Ensembl"/>
</dbReference>
<dbReference type="GO" id="GO:0016604">
    <property type="term" value="C:nuclear body"/>
    <property type="evidence" value="ECO:0007669"/>
    <property type="project" value="Ensembl"/>
</dbReference>
<dbReference type="GO" id="GO:0005634">
    <property type="term" value="C:nucleus"/>
    <property type="evidence" value="ECO:0000314"/>
    <property type="project" value="UniProtKB"/>
</dbReference>
<dbReference type="GO" id="GO:0005667">
    <property type="term" value="C:transcription regulator complex"/>
    <property type="evidence" value="ECO:0000269"/>
    <property type="project" value="ComplexPortal"/>
</dbReference>
<dbReference type="GO" id="GO:0001228">
    <property type="term" value="F:DNA-binding transcription activator activity, RNA polymerase II-specific"/>
    <property type="evidence" value="ECO:0007669"/>
    <property type="project" value="Ensembl"/>
</dbReference>
<dbReference type="GO" id="GO:0004879">
    <property type="term" value="F:nuclear receptor activity"/>
    <property type="evidence" value="ECO:0000314"/>
    <property type="project" value="UniProtKB"/>
</dbReference>
<dbReference type="GO" id="GO:0016922">
    <property type="term" value="F:nuclear receptor binding"/>
    <property type="evidence" value="ECO:0007669"/>
    <property type="project" value="Ensembl"/>
</dbReference>
<dbReference type="GO" id="GO:0000977">
    <property type="term" value="F:RNA polymerase II transcription regulatory region sequence-specific DNA binding"/>
    <property type="evidence" value="ECO:0007669"/>
    <property type="project" value="Ensembl"/>
</dbReference>
<dbReference type="GO" id="GO:0008270">
    <property type="term" value="F:zinc ion binding"/>
    <property type="evidence" value="ECO:0007669"/>
    <property type="project" value="UniProtKB-KW"/>
</dbReference>
<dbReference type="GO" id="GO:0071219">
    <property type="term" value="P:cellular response to molecule of bacterial origin"/>
    <property type="evidence" value="ECO:0000314"/>
    <property type="project" value="UniProtKB"/>
</dbReference>
<dbReference type="GO" id="GO:0045892">
    <property type="term" value="P:negative regulation of DNA-templated transcription"/>
    <property type="evidence" value="ECO:0000266"/>
    <property type="project" value="MGI"/>
</dbReference>
<dbReference type="GO" id="GO:0045893">
    <property type="term" value="P:positive regulation of DNA-templated transcription"/>
    <property type="evidence" value="ECO:0000250"/>
    <property type="project" value="UniProtKB"/>
</dbReference>
<dbReference type="GO" id="GO:0010628">
    <property type="term" value="P:positive regulation of gene expression"/>
    <property type="evidence" value="ECO:0000315"/>
    <property type="project" value="MGI"/>
</dbReference>
<dbReference type="GO" id="GO:0045944">
    <property type="term" value="P:positive regulation of transcription by RNA polymerase II"/>
    <property type="evidence" value="ECO:0000303"/>
    <property type="project" value="ComplexPortal"/>
</dbReference>
<dbReference type="GO" id="GO:0042178">
    <property type="term" value="P:xenobiotic catabolic process"/>
    <property type="evidence" value="ECO:0000250"/>
    <property type="project" value="UniProtKB"/>
</dbReference>
<dbReference type="GO" id="GO:0006805">
    <property type="term" value="P:xenobiotic metabolic process"/>
    <property type="evidence" value="ECO:0000250"/>
    <property type="project" value="UniProtKB"/>
</dbReference>
<dbReference type="GO" id="GO:0042908">
    <property type="term" value="P:xenobiotic transport"/>
    <property type="evidence" value="ECO:0000250"/>
    <property type="project" value="UniProtKB"/>
</dbReference>
<dbReference type="FunFam" id="1.10.565.10:FF:000024">
    <property type="entry name" value="Nuclear receptor subfamily 1 group I member 2"/>
    <property type="match status" value="1"/>
</dbReference>
<dbReference type="FunFam" id="3.30.50.10:FF:000033">
    <property type="entry name" value="Nuclear receptor subfamily 1 group I member 2"/>
    <property type="match status" value="1"/>
</dbReference>
<dbReference type="Gene3D" id="3.30.50.10">
    <property type="entry name" value="Erythroid Transcription Factor GATA-1, subunit A"/>
    <property type="match status" value="1"/>
</dbReference>
<dbReference type="Gene3D" id="1.10.565.10">
    <property type="entry name" value="Retinoid X Receptor"/>
    <property type="match status" value="1"/>
</dbReference>
<dbReference type="InterPro" id="IPR035500">
    <property type="entry name" value="NHR-like_dom_sf"/>
</dbReference>
<dbReference type="InterPro" id="IPR000536">
    <property type="entry name" value="Nucl_hrmn_rcpt_lig-bd"/>
</dbReference>
<dbReference type="InterPro" id="IPR050234">
    <property type="entry name" value="Nuclear_hormone_rcpt_NR1"/>
</dbReference>
<dbReference type="InterPro" id="IPR001723">
    <property type="entry name" value="Nuclear_hrmn_rcpt"/>
</dbReference>
<dbReference type="InterPro" id="IPR001628">
    <property type="entry name" value="Znf_hrmn_rcpt"/>
</dbReference>
<dbReference type="InterPro" id="IPR013088">
    <property type="entry name" value="Znf_NHR/GATA"/>
</dbReference>
<dbReference type="PANTHER" id="PTHR24082">
    <property type="entry name" value="NUCLEAR HORMONE RECEPTOR"/>
    <property type="match status" value="1"/>
</dbReference>
<dbReference type="PANTHER" id="PTHR24082:SF39">
    <property type="entry name" value="NUCLEAR RECEPTOR SUBFAMILY 1 GROUP I MEMBER 2"/>
    <property type="match status" value="1"/>
</dbReference>
<dbReference type="Pfam" id="PF00104">
    <property type="entry name" value="Hormone_recep"/>
    <property type="match status" value="1"/>
</dbReference>
<dbReference type="Pfam" id="PF00105">
    <property type="entry name" value="zf-C4"/>
    <property type="match status" value="1"/>
</dbReference>
<dbReference type="PRINTS" id="PR00398">
    <property type="entry name" value="STRDHORMONER"/>
</dbReference>
<dbReference type="PRINTS" id="PR00047">
    <property type="entry name" value="STROIDFINGER"/>
</dbReference>
<dbReference type="SMART" id="SM00430">
    <property type="entry name" value="HOLI"/>
    <property type="match status" value="1"/>
</dbReference>
<dbReference type="SMART" id="SM00399">
    <property type="entry name" value="ZnF_C4"/>
    <property type="match status" value="1"/>
</dbReference>
<dbReference type="SUPFAM" id="SSF57716">
    <property type="entry name" value="Glucocorticoid receptor-like (DNA-binding domain)"/>
    <property type="match status" value="1"/>
</dbReference>
<dbReference type="SUPFAM" id="SSF48508">
    <property type="entry name" value="Nuclear receptor ligand-binding domain"/>
    <property type="match status" value="1"/>
</dbReference>
<dbReference type="PROSITE" id="PS51843">
    <property type="entry name" value="NR_LBD"/>
    <property type="match status" value="1"/>
</dbReference>
<dbReference type="PROSITE" id="PS00031">
    <property type="entry name" value="NUCLEAR_REC_DBD_1"/>
    <property type="match status" value="1"/>
</dbReference>
<dbReference type="PROSITE" id="PS51030">
    <property type="entry name" value="NUCLEAR_REC_DBD_2"/>
    <property type="match status" value="1"/>
</dbReference>
<name>NR1I2_MOUSE</name>